<evidence type="ECO:0000255" key="1">
    <source>
        <dbReference type="HAMAP-Rule" id="MF_00291"/>
    </source>
</evidence>
<evidence type="ECO:0000305" key="2"/>
<sequence>MSVRFQSDDEYMRNLITTSGISIGTQVKTKFMKQFISDTDPTGTYTLDLEATQGRIKAAAQFIEHTGASELIVCSGKDSARVPIRKFAELVGCKDIHKRFMPGTLTNPDLPKYMEPKLLLVCDPQVDAQAVTEATNAGIPVIGIANSDNVTSRLDVIIPANNRGRGALAAIFWLLAREVLVIRGEVDETKPMKYEIDDFETKDVREDE</sequence>
<feature type="chain" id="PRO_0000352053" description="Small ribosomal subunit protein uS2">
    <location>
        <begin position="1"/>
        <end position="208"/>
    </location>
</feature>
<keyword id="KW-1185">Reference proteome</keyword>
<keyword id="KW-0687">Ribonucleoprotein</keyword>
<keyword id="KW-0689">Ribosomal protein</keyword>
<dbReference type="EMBL" id="DP000238">
    <property type="protein sequence ID" value="ABK78231.1"/>
    <property type="molecule type" value="Genomic_DNA"/>
</dbReference>
<dbReference type="SMR" id="A0RY14"/>
<dbReference type="STRING" id="414004.CENSYa_1612"/>
<dbReference type="EnsemblBacteria" id="ABK78231">
    <property type="protein sequence ID" value="ABK78231"/>
    <property type="gene ID" value="CENSYa_1612"/>
</dbReference>
<dbReference type="KEGG" id="csy:CENSYa_1612"/>
<dbReference type="PATRIC" id="fig|414004.10.peg.1474"/>
<dbReference type="HOGENOM" id="CLU_058171_3_0_2"/>
<dbReference type="Proteomes" id="UP000000758">
    <property type="component" value="Chromosome"/>
</dbReference>
<dbReference type="GO" id="GO:0015935">
    <property type="term" value="C:small ribosomal subunit"/>
    <property type="evidence" value="ECO:0007669"/>
    <property type="project" value="InterPro"/>
</dbReference>
<dbReference type="GO" id="GO:0003735">
    <property type="term" value="F:structural constituent of ribosome"/>
    <property type="evidence" value="ECO:0007669"/>
    <property type="project" value="InterPro"/>
</dbReference>
<dbReference type="GO" id="GO:0006412">
    <property type="term" value="P:translation"/>
    <property type="evidence" value="ECO:0007669"/>
    <property type="project" value="UniProtKB-UniRule"/>
</dbReference>
<dbReference type="CDD" id="cd01425">
    <property type="entry name" value="RPS2"/>
    <property type="match status" value="1"/>
</dbReference>
<dbReference type="FunFam" id="3.40.50.10490:FF:000030">
    <property type="entry name" value="30S ribosomal protein S2"/>
    <property type="match status" value="1"/>
</dbReference>
<dbReference type="Gene3D" id="3.40.50.10490">
    <property type="entry name" value="Glucose-6-phosphate isomerase like protein, domain 1"/>
    <property type="match status" value="1"/>
</dbReference>
<dbReference type="HAMAP" id="MF_00291_A">
    <property type="entry name" value="Ribosomal_uS2_A"/>
    <property type="match status" value="1"/>
</dbReference>
<dbReference type="InterPro" id="IPR001865">
    <property type="entry name" value="Ribosomal_uS2"/>
</dbReference>
<dbReference type="InterPro" id="IPR023454">
    <property type="entry name" value="Ribosomal_uS2_arc"/>
</dbReference>
<dbReference type="InterPro" id="IPR018130">
    <property type="entry name" value="Ribosomal_uS2_CS"/>
</dbReference>
<dbReference type="InterPro" id="IPR005707">
    <property type="entry name" value="Ribosomal_uS2_euk/arc"/>
</dbReference>
<dbReference type="InterPro" id="IPR023591">
    <property type="entry name" value="Ribosomal_uS2_flav_dom_sf"/>
</dbReference>
<dbReference type="PANTHER" id="PTHR11489">
    <property type="entry name" value="40S RIBOSOMAL PROTEIN SA"/>
    <property type="match status" value="1"/>
</dbReference>
<dbReference type="Pfam" id="PF00318">
    <property type="entry name" value="Ribosomal_S2"/>
    <property type="match status" value="2"/>
</dbReference>
<dbReference type="PRINTS" id="PR00395">
    <property type="entry name" value="RIBOSOMALS2"/>
</dbReference>
<dbReference type="SUPFAM" id="SSF52313">
    <property type="entry name" value="Ribosomal protein S2"/>
    <property type="match status" value="1"/>
</dbReference>
<dbReference type="PROSITE" id="PS00963">
    <property type="entry name" value="RIBOSOMAL_S2_2"/>
    <property type="match status" value="1"/>
</dbReference>
<proteinExistence type="inferred from homology"/>
<reference key="1">
    <citation type="journal article" date="2006" name="Proc. Natl. Acad. Sci. U.S.A.">
        <title>Genomic analysis of the uncultivated marine crenarchaeote Cenarchaeum symbiosum.</title>
        <authorList>
            <person name="Hallam S.J."/>
            <person name="Konstantinidis K.T."/>
            <person name="Putnam N."/>
            <person name="Schleper C."/>
            <person name="Watanabe Y."/>
            <person name="Sugahara J."/>
            <person name="Preston C."/>
            <person name="de la Torre J."/>
            <person name="Richardson P.M."/>
            <person name="DeLong E.F."/>
        </authorList>
    </citation>
    <scope>NUCLEOTIDE SEQUENCE [LARGE SCALE GENOMIC DNA]</scope>
    <source>
        <strain>A</strain>
    </source>
</reference>
<organism>
    <name type="scientific">Cenarchaeum symbiosum (strain A)</name>
    <dbReference type="NCBI Taxonomy" id="414004"/>
    <lineage>
        <taxon>Archaea</taxon>
        <taxon>Nitrososphaerota</taxon>
        <taxon>Candidatus Cenarchaeales</taxon>
        <taxon>Candidatus Cenarchaeaceae</taxon>
        <taxon>Candidatus Cenarchaeum</taxon>
    </lineage>
</organism>
<gene>
    <name evidence="1" type="primary">rps2</name>
    <name type="ordered locus">CENSYa_1612</name>
</gene>
<protein>
    <recommendedName>
        <fullName evidence="1">Small ribosomal subunit protein uS2</fullName>
    </recommendedName>
    <alternativeName>
        <fullName evidence="2">30S ribosomal protein S2</fullName>
    </alternativeName>
</protein>
<accession>A0RY14</accession>
<comment type="similarity">
    <text evidence="1">Belongs to the universal ribosomal protein uS2 family.</text>
</comment>
<name>RS2_CENSY</name>